<name>FSCC_FUSEQ</name>
<reference key="1">
    <citation type="journal article" date="2021" name="Org. Biomol. Chem.">
        <title>Fusarochromene, a novel tryptophan-derived metabolite from Fusarium sacchari.</title>
        <authorList>
            <person name="Marshall J.W."/>
            <person name="de Mattos-Shipley K.M.J."/>
            <person name="Ghannam I.A.Y."/>
            <person name="Munawar A."/>
            <person name="Killen J.C."/>
            <person name="Lazarus C.M."/>
            <person name="Cox R.J."/>
            <person name="Willis C.L."/>
            <person name="Simpson T.J."/>
        </authorList>
    </citation>
    <scope>NUCLEOTIDE SEQUENCE [GENOMIC DNA]</scope>
    <scope>FUNCTION</scope>
    <scope>PATHWAY</scope>
</reference>
<accession>A0A823A819</accession>
<evidence type="ECO:0000250" key="1">
    <source>
        <dbReference type="UniProtKB" id="C8V7P4"/>
    </source>
</evidence>
<evidence type="ECO:0000255" key="2"/>
<evidence type="ECO:0000255" key="3">
    <source>
        <dbReference type="PROSITE-ProRule" id="PRU00258"/>
    </source>
</evidence>
<evidence type="ECO:0000269" key="4">
    <source>
    </source>
</evidence>
<evidence type="ECO:0000303" key="5">
    <source>
    </source>
</evidence>
<evidence type="ECO:0000305" key="6"/>
<evidence type="ECO:0000305" key="7">
    <source>
    </source>
</evidence>
<protein>
    <recommendedName>
        <fullName evidence="5">NRPS-like tryptophan epimerase fscC</fullName>
        <ecNumber evidence="7">5.1.-.-</ecNumber>
    </recommendedName>
    <alternativeName>
        <fullName evidence="5">Fusarochromene biosynthesis cluster protein C</fullName>
    </alternativeName>
</protein>
<keyword id="KW-0413">Isomerase</keyword>
<keyword id="KW-0596">Phosphopantetheine</keyword>
<keyword id="KW-0597">Phosphoprotein</keyword>
<comment type="function">
    <text evidence="4 7">NRPS-like tryptophan epimerase; part of the fragmented gene cluster that mediates the biosynthesis of fusarochromene, a tryptophan-derived metabolite closely related to a group of mycotoxins including fusarochromanone (PubMed:33107888). Within the pathway, fscC catalyzes the first step via epimerization of L-tryptophan to provide the intermediate D-tryptophan (Probable). D-tryptophan is subsequently hydroxylated by the tryptophan 6-hydroxylase fscE to yield 6-hydroxytryptophan. The pyrrole ring undergoes cleavaged by the tryptophan 2,3-dioxygenase fscD and is finally converted to 4-hydroxykyrunenine by the hydrolase fscH. The NRPS-like oxidoreductase fscA reduces the carboxyl group to primary alcohol and the DMATS-type prenyltransferase fscG performs prenylation, followed by the formation of a chromene ring catalyzed by the oxidoreductase fscI, which leads to desacetylfusarochromene. Epoxidation by fscF and rearrangement reactions of chromene double bonds convert compound desacetylfusarochromene to fusarochromanones. Although specific acetyltransferases were not found near the fsc gene cluster, several predicted enzymes containing the N-acetyltransferase superfamily domain are present in the genome of F.equiseti. These predicted enzymes may have the potential to convert desacetylfusarochromene to fusarochromene (Probable).</text>
</comment>
<comment type="cofactor">
    <cofactor evidence="3">
        <name>pantetheine 4'-phosphate</name>
        <dbReference type="ChEBI" id="CHEBI:47942"/>
    </cofactor>
</comment>
<comment type="pathway">
    <text evidence="7">Secondary metabolite biosynthesis.</text>
</comment>
<comment type="domain">
    <text evidence="7">NRP synthetases are composed of discrete domains (adenylation (A), thiolation (T) or peptidyl carrier protein (PCP) and condensation (C) domains) which when grouped together are referred to as a single module. Each module is responsible for the recognition (via the A domain) and incorporation of a single amino acid into the growing peptide product. Thus, an NRP synthetase is generally composed of one or more modules and can terminate in a thioesterase domain (TE) that releases the newly synthesized peptide from the enzyme. Occasionally, epimerase (E) domains responsible for L- to D-amino acid conversion are present within the NRP synthetase. FscC acts as a tryptophan epimerase and has the following mono-modular architecture: A-T-E-C.</text>
</comment>
<comment type="similarity">
    <text evidence="6">Belongs to the NRP synthetase family.</text>
</comment>
<sequence length="1453" mass="161901">MLLLDIMDSHCIHTLVDQRASSQPLEPAVETYDVSLSYGELSAMSSKLSQYLVSLGIYPEAKVVLMMEPCASYVVSTISVLKAGATFVPLDATQPTKRLAQLIKDIKPFIIITSIEVQDKARSLYDNVLVVDQTPSPWQDAPLKTGAACHVNGSNAAYIIFTSGSTGLPKGVIIEHGAFSASALARGNLTGLSLGSRVLQYAAHTFDVSVDEILTTLIHGGCVCIPSKADRLLLEPAINRLQVNHALLTPTSAKVLDPDAVPSLKTLQLGGELLPDDLIRKWCSRVRLFNVYGPTEASVACIMSEKSQKNIFGNVIGFPVGSVCRIVDPDDHNQLVAPGVVGELLIGGRILARGYLNDNIRTASSFIESPPWTSDDNATRFYKTGDLAKIDHYGSVTILGRKDNQVKIRGQRINVEEIETTLLATHLIRNCVVELPKKGPLANKLVAIVSTTSDTPHCKHPPPAAFSEQLQASVSTLDGLLRTRLHDALQDHLTSAMIPKRWIRMTSLPETTSGKVNRKEIRRWLERMDASVLQSVSLSNVESTGSRQSTRHKIQPEHEKILCRILGVNPTLLKPHLSFIQNGGDSIAAIELCRLGREIGISFWISSVLSDNSLEKLFHTSKSRFTKTIAHESQPGTPFPLSPVQRFFFDVVGNEHSSFTQYVTLQLKNRISIAQLERVIDRLVSAHPMLRARFHSENDTWLQSIPERISGSYSIFHHHGVGPPNHELMQPPVLSLASDPVLNVRLWDFDSGPQQLQLIAHHLVVDLVSWRIILDDLSKALRHERLPSAGMSFQSWCALQKEYAKTLDPKLVLPIPIISDNCAYWYPSVAQQENKHGMTETSTFSFDMLTFNSLLVGSLSKTQPIELMVGSFYTAFAKVFSDRETPTVFVESHGREPWQTGIDILQTVGWFTTAYPIHVPAQKASDLNESTLHTMRARRSIPANGHQYWCHRFLEQYEPDERKRSAPLEFVINFAGQFQQLSQADLPFRVMSTVGEETAEPQARRLSLFDIFISVEGDQLHFNISFPSWVSHRDKIHHLSTVWKDVLESAGVFSERPVLDPEPIDMLRELWHDCSLKDIDEVYWASDAQNHMLNSSSRHPSFYTVVGRWRLKCNTGAPLTDAFRVQDAWKRVITNHRALRTIFIPGDRKCGFLAVVMEQSFPMVLTGGASDTSDTNGTTRFFGLQSNERAIHLPHRIILHESNDGSILFSLEISHTVIDATSRSILMNELLDALVDIDLVPDDSHYHEYIESRDALYALSPPCQPPPCIFPPDLHCSDSAGSQLSTHVVELSQTSTANMSQICSQHGITMSSLLFLSWTLVLSNYTSSDDISFAYVASGRSMDVPGIERFVGLYVDLLILNIDTSGSDCLLDLALRVQQMSAGSSLHQHNQIPACRNPKNGRFDGQVNTMVNIRNVGIDSLRLERHDFELLLDSFEDPWDVRFFNTSCPFLPI</sequence>
<proteinExistence type="inferred from homology"/>
<feature type="chain" id="PRO_0000461410" description="NRPS-like tryptophan epimerase fscC">
    <location>
        <begin position="1"/>
        <end position="1453"/>
    </location>
</feature>
<feature type="domain" description="Carrier" evidence="3 7">
    <location>
        <begin position="544"/>
        <end position="626"/>
    </location>
</feature>
<feature type="region of interest" description="Adenylation" evidence="2 7">
    <location>
        <begin position="37"/>
        <end position="433"/>
    </location>
</feature>
<feature type="region of interest" description="Epimerization (E) domain" evidence="1 2">
    <location>
        <begin position="639"/>
        <end position="1053"/>
    </location>
</feature>
<feature type="region of interest" description="Condensation" evidence="1 2">
    <location>
        <begin position="1181"/>
        <end position="1391"/>
    </location>
</feature>
<feature type="modified residue" description="O-(pantetheine 4'-phosphoryl)serine" evidence="3">
    <location>
        <position position="586"/>
    </location>
</feature>
<gene>
    <name evidence="5" type="primary">fscC</name>
</gene>
<dbReference type="EC" id="5.1.-.-" evidence="7"/>
<dbReference type="EMBL" id="BK013344">
    <property type="protein sequence ID" value="DAD54576.1"/>
    <property type="molecule type" value="Genomic_DNA"/>
</dbReference>
<dbReference type="SMR" id="A0A823A819"/>
<dbReference type="GO" id="GO:0016853">
    <property type="term" value="F:isomerase activity"/>
    <property type="evidence" value="ECO:0007669"/>
    <property type="project" value="UniProtKB-KW"/>
</dbReference>
<dbReference type="CDD" id="cd05918">
    <property type="entry name" value="A_NRPS_SidN3_like"/>
    <property type="match status" value="1"/>
</dbReference>
<dbReference type="Gene3D" id="3.30.300.30">
    <property type="match status" value="1"/>
</dbReference>
<dbReference type="Gene3D" id="3.30.559.10">
    <property type="entry name" value="Chloramphenicol acetyltransferase-like domain"/>
    <property type="match status" value="2"/>
</dbReference>
<dbReference type="Gene3D" id="3.40.50.12780">
    <property type="entry name" value="N-terminal domain of ligase-like"/>
    <property type="match status" value="1"/>
</dbReference>
<dbReference type="Gene3D" id="3.30.559.30">
    <property type="entry name" value="Nonribosomal peptide synthetase, condensation domain"/>
    <property type="match status" value="2"/>
</dbReference>
<dbReference type="InterPro" id="IPR010071">
    <property type="entry name" value="AA_adenyl_dom"/>
</dbReference>
<dbReference type="InterPro" id="IPR045851">
    <property type="entry name" value="AMP-bd_C_sf"/>
</dbReference>
<dbReference type="InterPro" id="IPR020845">
    <property type="entry name" value="AMP-binding_CS"/>
</dbReference>
<dbReference type="InterPro" id="IPR000873">
    <property type="entry name" value="AMP-dep_synth/lig_dom"/>
</dbReference>
<dbReference type="InterPro" id="IPR042099">
    <property type="entry name" value="ANL_N_sf"/>
</dbReference>
<dbReference type="InterPro" id="IPR023213">
    <property type="entry name" value="CAT-like_dom_sf"/>
</dbReference>
<dbReference type="InterPro" id="IPR001242">
    <property type="entry name" value="Condensatn"/>
</dbReference>
<dbReference type="NCBIfam" id="TIGR01733">
    <property type="entry name" value="AA-adenyl-dom"/>
    <property type="match status" value="1"/>
</dbReference>
<dbReference type="PANTHER" id="PTHR45398">
    <property type="match status" value="1"/>
</dbReference>
<dbReference type="PANTHER" id="PTHR45398:SF1">
    <property type="entry name" value="ENZYME, PUTATIVE (JCVI)-RELATED"/>
    <property type="match status" value="1"/>
</dbReference>
<dbReference type="Pfam" id="PF00501">
    <property type="entry name" value="AMP-binding"/>
    <property type="match status" value="1"/>
</dbReference>
<dbReference type="Pfam" id="PF00668">
    <property type="entry name" value="Condensation"/>
    <property type="match status" value="2"/>
</dbReference>
<dbReference type="SUPFAM" id="SSF56801">
    <property type="entry name" value="Acetyl-CoA synthetase-like"/>
    <property type="match status" value="1"/>
</dbReference>
<dbReference type="SUPFAM" id="SSF52777">
    <property type="entry name" value="CoA-dependent acyltransferases"/>
    <property type="match status" value="4"/>
</dbReference>
<dbReference type="PROSITE" id="PS00455">
    <property type="entry name" value="AMP_BINDING"/>
    <property type="match status" value="1"/>
</dbReference>
<organism>
    <name type="scientific">Fusarium equiseti</name>
    <name type="common">Fusarium scirpi</name>
    <dbReference type="NCBI Taxonomy" id="61235"/>
    <lineage>
        <taxon>Eukaryota</taxon>
        <taxon>Fungi</taxon>
        <taxon>Dikarya</taxon>
        <taxon>Ascomycota</taxon>
        <taxon>Pezizomycotina</taxon>
        <taxon>Sordariomycetes</taxon>
        <taxon>Hypocreomycetidae</taxon>
        <taxon>Hypocreales</taxon>
        <taxon>Nectriaceae</taxon>
        <taxon>Fusarium</taxon>
        <taxon>Fusarium incarnatum-equiseti species complex</taxon>
    </lineage>
</organism>